<sequence length="277" mass="29895">MTQQIDRYAVFGNPIEHSKSPFIHTLFARQTNQPLIYTAETAPKEGFVEAVKAFFAEGGKGCNVTLPFKEEAYQFASRLTERAQLAGAVNTLKKLDDGDIIGDNTDGAGLVQDLLQHQVVLAGARILVIGAGGAARGVLKPLLDQKPTSLTITNRTFSKAEKLAVLFAAYGSVTAKEMNTVTEEYDVIINSTSASLSGELPALSSSIFAANSTSYDMMYGKGDTTFNQWAKQHGAAHAYDGLGMLVGQAAESFMLWRGLRPGSKQILRELRKNLEGL</sequence>
<name>AROE_VIBVU</name>
<proteinExistence type="inferred from homology"/>
<accession>Q8DDD4</accession>
<keyword id="KW-0028">Amino-acid biosynthesis</keyword>
<keyword id="KW-0057">Aromatic amino acid biosynthesis</keyword>
<keyword id="KW-0521">NADP</keyword>
<keyword id="KW-0560">Oxidoreductase</keyword>
<comment type="function">
    <text evidence="1">Involved in the biosynthesis of the chorismate, which leads to the biosynthesis of aromatic amino acids. Catalyzes the reversible NADPH linked reduction of 3-dehydroshikimate (DHSA) to yield shikimate (SA).</text>
</comment>
<comment type="catalytic activity">
    <reaction evidence="1">
        <text>shikimate + NADP(+) = 3-dehydroshikimate + NADPH + H(+)</text>
        <dbReference type="Rhea" id="RHEA:17737"/>
        <dbReference type="ChEBI" id="CHEBI:15378"/>
        <dbReference type="ChEBI" id="CHEBI:16630"/>
        <dbReference type="ChEBI" id="CHEBI:36208"/>
        <dbReference type="ChEBI" id="CHEBI:57783"/>
        <dbReference type="ChEBI" id="CHEBI:58349"/>
        <dbReference type="EC" id="1.1.1.25"/>
    </reaction>
</comment>
<comment type="pathway">
    <text evidence="1">Metabolic intermediate biosynthesis; chorismate biosynthesis; chorismate from D-erythrose 4-phosphate and phosphoenolpyruvate: step 4/7.</text>
</comment>
<comment type="subunit">
    <text evidence="1">Homodimer.</text>
</comment>
<comment type="similarity">
    <text evidence="1">Belongs to the shikimate dehydrogenase family.</text>
</comment>
<organism>
    <name type="scientific">Vibrio vulnificus (strain CMCP6)</name>
    <dbReference type="NCBI Taxonomy" id="216895"/>
    <lineage>
        <taxon>Bacteria</taxon>
        <taxon>Pseudomonadati</taxon>
        <taxon>Pseudomonadota</taxon>
        <taxon>Gammaproteobacteria</taxon>
        <taxon>Vibrionales</taxon>
        <taxon>Vibrionaceae</taxon>
        <taxon>Vibrio</taxon>
    </lineage>
</organism>
<feature type="chain" id="PRO_0000136050" description="Shikimate dehydrogenase (NADP(+))">
    <location>
        <begin position="1"/>
        <end position="277"/>
    </location>
</feature>
<feature type="active site" description="Proton acceptor" evidence="1">
    <location>
        <position position="69"/>
    </location>
</feature>
<feature type="binding site" evidence="1">
    <location>
        <begin position="18"/>
        <end position="20"/>
    </location>
    <ligand>
        <name>shikimate</name>
        <dbReference type="ChEBI" id="CHEBI:36208"/>
    </ligand>
</feature>
<feature type="binding site" evidence="1">
    <location>
        <position position="65"/>
    </location>
    <ligand>
        <name>shikimate</name>
        <dbReference type="ChEBI" id="CHEBI:36208"/>
    </ligand>
</feature>
<feature type="binding site" evidence="1">
    <location>
        <position position="81"/>
    </location>
    <ligand>
        <name>NADP(+)</name>
        <dbReference type="ChEBI" id="CHEBI:58349"/>
    </ligand>
</feature>
<feature type="binding site" evidence="1">
    <location>
        <position position="90"/>
    </location>
    <ligand>
        <name>shikimate</name>
        <dbReference type="ChEBI" id="CHEBI:36208"/>
    </ligand>
</feature>
<feature type="binding site" evidence="1">
    <location>
        <position position="106"/>
    </location>
    <ligand>
        <name>shikimate</name>
        <dbReference type="ChEBI" id="CHEBI:36208"/>
    </ligand>
</feature>
<feature type="binding site" evidence="1">
    <location>
        <begin position="130"/>
        <end position="134"/>
    </location>
    <ligand>
        <name>NADP(+)</name>
        <dbReference type="ChEBI" id="CHEBI:58349"/>
    </ligand>
</feature>
<feature type="binding site" evidence="1">
    <location>
        <begin position="154"/>
        <end position="159"/>
    </location>
    <ligand>
        <name>NADP(+)</name>
        <dbReference type="ChEBI" id="CHEBI:58349"/>
    </ligand>
</feature>
<feature type="binding site" evidence="1">
    <location>
        <position position="217"/>
    </location>
    <ligand>
        <name>NADP(+)</name>
        <dbReference type="ChEBI" id="CHEBI:58349"/>
    </ligand>
</feature>
<feature type="binding site" evidence="1">
    <location>
        <position position="219"/>
    </location>
    <ligand>
        <name>shikimate</name>
        <dbReference type="ChEBI" id="CHEBI:36208"/>
    </ligand>
</feature>
<feature type="binding site" evidence="1">
    <location>
        <position position="241"/>
    </location>
    <ligand>
        <name>NADP(+)</name>
        <dbReference type="ChEBI" id="CHEBI:58349"/>
    </ligand>
</feature>
<reference key="1">
    <citation type="submission" date="2002-12" db="EMBL/GenBank/DDBJ databases">
        <title>Complete genome sequence of Vibrio vulnificus CMCP6.</title>
        <authorList>
            <person name="Rhee J.H."/>
            <person name="Kim S.Y."/>
            <person name="Chung S.S."/>
            <person name="Kim J.J."/>
            <person name="Moon Y.H."/>
            <person name="Jeong H."/>
            <person name="Choy H.E."/>
        </authorList>
    </citation>
    <scope>NUCLEOTIDE SEQUENCE [LARGE SCALE GENOMIC DNA]</scope>
    <source>
        <strain>CMCP6</strain>
    </source>
</reference>
<protein>
    <recommendedName>
        <fullName evidence="1">Shikimate dehydrogenase (NADP(+))</fullName>
        <shortName evidence="1">SDH</shortName>
        <ecNumber evidence="1">1.1.1.25</ecNumber>
    </recommendedName>
</protein>
<gene>
    <name evidence="1" type="primary">aroE</name>
    <name type="ordered locus">VV1_1057</name>
</gene>
<evidence type="ECO:0000255" key="1">
    <source>
        <dbReference type="HAMAP-Rule" id="MF_00222"/>
    </source>
</evidence>
<dbReference type="EC" id="1.1.1.25" evidence="1"/>
<dbReference type="EMBL" id="AE016795">
    <property type="protein sequence ID" value="AAO09544.1"/>
    <property type="molecule type" value="Genomic_DNA"/>
</dbReference>
<dbReference type="RefSeq" id="WP_011079090.1">
    <property type="nucleotide sequence ID" value="NC_004459.3"/>
</dbReference>
<dbReference type="SMR" id="Q8DDD4"/>
<dbReference type="KEGG" id="vvu:VV1_1057"/>
<dbReference type="HOGENOM" id="CLU_044063_2_1_6"/>
<dbReference type="UniPathway" id="UPA00053">
    <property type="reaction ID" value="UER00087"/>
</dbReference>
<dbReference type="Proteomes" id="UP000002275">
    <property type="component" value="Chromosome 1"/>
</dbReference>
<dbReference type="GO" id="GO:0005829">
    <property type="term" value="C:cytosol"/>
    <property type="evidence" value="ECO:0007669"/>
    <property type="project" value="TreeGrafter"/>
</dbReference>
<dbReference type="GO" id="GO:0050661">
    <property type="term" value="F:NADP binding"/>
    <property type="evidence" value="ECO:0007669"/>
    <property type="project" value="InterPro"/>
</dbReference>
<dbReference type="GO" id="GO:0004764">
    <property type="term" value="F:shikimate 3-dehydrogenase (NADP+) activity"/>
    <property type="evidence" value="ECO:0007669"/>
    <property type="project" value="UniProtKB-UniRule"/>
</dbReference>
<dbReference type="GO" id="GO:0008652">
    <property type="term" value="P:amino acid biosynthetic process"/>
    <property type="evidence" value="ECO:0007669"/>
    <property type="project" value="UniProtKB-KW"/>
</dbReference>
<dbReference type="GO" id="GO:0009073">
    <property type="term" value="P:aromatic amino acid family biosynthetic process"/>
    <property type="evidence" value="ECO:0007669"/>
    <property type="project" value="UniProtKB-KW"/>
</dbReference>
<dbReference type="GO" id="GO:0009423">
    <property type="term" value="P:chorismate biosynthetic process"/>
    <property type="evidence" value="ECO:0007669"/>
    <property type="project" value="UniProtKB-UniRule"/>
</dbReference>
<dbReference type="GO" id="GO:0019632">
    <property type="term" value="P:shikimate metabolic process"/>
    <property type="evidence" value="ECO:0007669"/>
    <property type="project" value="InterPro"/>
</dbReference>
<dbReference type="CDD" id="cd01065">
    <property type="entry name" value="NAD_bind_Shikimate_DH"/>
    <property type="match status" value="1"/>
</dbReference>
<dbReference type="FunFam" id="3.40.50.10860:FF:000006">
    <property type="entry name" value="Shikimate dehydrogenase (NADP(+))"/>
    <property type="match status" value="1"/>
</dbReference>
<dbReference type="FunFam" id="3.40.50.720:FF:000104">
    <property type="entry name" value="Shikimate dehydrogenase (NADP(+))"/>
    <property type="match status" value="1"/>
</dbReference>
<dbReference type="Gene3D" id="3.40.50.10860">
    <property type="entry name" value="Leucine Dehydrogenase, chain A, domain 1"/>
    <property type="match status" value="1"/>
</dbReference>
<dbReference type="Gene3D" id="3.40.50.720">
    <property type="entry name" value="NAD(P)-binding Rossmann-like Domain"/>
    <property type="match status" value="1"/>
</dbReference>
<dbReference type="HAMAP" id="MF_00222">
    <property type="entry name" value="Shikimate_DH_AroE"/>
    <property type="match status" value="1"/>
</dbReference>
<dbReference type="InterPro" id="IPR046346">
    <property type="entry name" value="Aminoacid_DH-like_N_sf"/>
</dbReference>
<dbReference type="InterPro" id="IPR036291">
    <property type="entry name" value="NAD(P)-bd_dom_sf"/>
</dbReference>
<dbReference type="InterPro" id="IPR041121">
    <property type="entry name" value="SDH_C"/>
</dbReference>
<dbReference type="InterPro" id="IPR011342">
    <property type="entry name" value="Shikimate_DH"/>
</dbReference>
<dbReference type="InterPro" id="IPR013708">
    <property type="entry name" value="Shikimate_DH-bd_N"/>
</dbReference>
<dbReference type="InterPro" id="IPR022893">
    <property type="entry name" value="Shikimate_DH_fam"/>
</dbReference>
<dbReference type="InterPro" id="IPR006151">
    <property type="entry name" value="Shikm_DH/Glu-tRNA_Rdtase"/>
</dbReference>
<dbReference type="NCBIfam" id="TIGR00507">
    <property type="entry name" value="aroE"/>
    <property type="match status" value="1"/>
</dbReference>
<dbReference type="NCBIfam" id="NF001310">
    <property type="entry name" value="PRK00258.1-2"/>
    <property type="match status" value="1"/>
</dbReference>
<dbReference type="PANTHER" id="PTHR21089:SF1">
    <property type="entry name" value="BIFUNCTIONAL 3-DEHYDROQUINATE DEHYDRATASE_SHIKIMATE DEHYDROGENASE, CHLOROPLASTIC"/>
    <property type="match status" value="1"/>
</dbReference>
<dbReference type="PANTHER" id="PTHR21089">
    <property type="entry name" value="SHIKIMATE DEHYDROGENASE"/>
    <property type="match status" value="1"/>
</dbReference>
<dbReference type="Pfam" id="PF18317">
    <property type="entry name" value="SDH_C"/>
    <property type="match status" value="1"/>
</dbReference>
<dbReference type="Pfam" id="PF01488">
    <property type="entry name" value="Shikimate_DH"/>
    <property type="match status" value="1"/>
</dbReference>
<dbReference type="Pfam" id="PF08501">
    <property type="entry name" value="Shikimate_dh_N"/>
    <property type="match status" value="1"/>
</dbReference>
<dbReference type="SUPFAM" id="SSF53223">
    <property type="entry name" value="Aminoacid dehydrogenase-like, N-terminal domain"/>
    <property type="match status" value="1"/>
</dbReference>
<dbReference type="SUPFAM" id="SSF51735">
    <property type="entry name" value="NAD(P)-binding Rossmann-fold domains"/>
    <property type="match status" value="1"/>
</dbReference>